<comment type="function">
    <text>Stimulates the secretion of gonadotropins; it stimulates the secretion of both luteinizing and follicle-stimulating hormones.</text>
</comment>
<comment type="subcellular location">
    <subcellularLocation>
        <location>Secreted</location>
    </subcellularLocation>
</comment>
<comment type="similarity">
    <text evidence="2">Belongs to the GnRH family.</text>
</comment>
<reference key="1">
    <citation type="journal article" date="1986" name="J. Biol. Chem.">
        <title>Primary structure of gonadotropin-releasing hormone from lamprey brain.</title>
        <authorList>
            <person name="Sherwood N.M."/>
            <person name="Sower S.A."/>
            <person name="Marshak D.R."/>
            <person name="Fraser B.A."/>
            <person name="Brownstein M.J."/>
        </authorList>
    </citation>
    <scope>PROTEIN SEQUENCE</scope>
    <scope>PYROGLUTAMATE FORMATION AT GLN-1</scope>
    <scope>AMIDATION AT GLY-10</scope>
    <source>
        <tissue>Brain</tissue>
    </source>
</reference>
<dbReference type="PIR" id="A01412">
    <property type="entry name" value="RHLMGS"/>
</dbReference>
<dbReference type="Proteomes" id="UP001318040">
    <property type="component" value="Unplaced"/>
</dbReference>
<dbReference type="GO" id="GO:0005576">
    <property type="term" value="C:extracellular region"/>
    <property type="evidence" value="ECO:0007669"/>
    <property type="project" value="UniProtKB-SubCell"/>
</dbReference>
<dbReference type="GO" id="GO:0005179">
    <property type="term" value="F:hormone activity"/>
    <property type="evidence" value="ECO:0007669"/>
    <property type="project" value="UniProtKB-KW"/>
</dbReference>
<dbReference type="InterPro" id="IPR002012">
    <property type="entry name" value="GnRH"/>
</dbReference>
<dbReference type="PROSITE" id="PS00473">
    <property type="entry name" value="GNRH"/>
    <property type="match status" value="1"/>
</dbReference>
<accession>P04378</accession>
<name>GON1_PETMA</name>
<protein>
    <recommendedName>
        <fullName>Gonadoliberin-1</fullName>
    </recommendedName>
    <alternativeName>
        <fullName>Gonadoliberin I</fullName>
    </alternativeName>
    <alternativeName>
        <fullName>Gonadotropin-releasing hormone I</fullName>
        <shortName>GnRH-I</shortName>
    </alternativeName>
    <alternativeName>
        <fullName>Luliberin I</fullName>
    </alternativeName>
</protein>
<evidence type="ECO:0000269" key="1">
    <source>
    </source>
</evidence>
<evidence type="ECO:0000305" key="2"/>
<feature type="peptide" id="PRO_0000043959" description="Gonadoliberin-1">
    <location>
        <begin position="1"/>
        <end position="10"/>
    </location>
</feature>
<feature type="modified residue" description="Pyrrolidone carboxylic acid" evidence="1">
    <location>
        <position position="1"/>
    </location>
</feature>
<feature type="modified residue" description="Glycine amide" evidence="1">
    <location>
        <position position="10"/>
    </location>
</feature>
<organism>
    <name type="scientific">Petromyzon marinus</name>
    <name type="common">Sea lamprey</name>
    <dbReference type="NCBI Taxonomy" id="7757"/>
    <lineage>
        <taxon>Eukaryota</taxon>
        <taxon>Metazoa</taxon>
        <taxon>Chordata</taxon>
        <taxon>Craniata</taxon>
        <taxon>Vertebrata</taxon>
        <taxon>Cyclostomata</taxon>
        <taxon>Hyperoartia</taxon>
        <taxon>Petromyzontiformes</taxon>
        <taxon>Petromyzontidae</taxon>
        <taxon>Petromyzon</taxon>
    </lineage>
</organism>
<proteinExistence type="evidence at protein level"/>
<sequence length="10" mass="1244">QHYSLEWKPG</sequence>
<keyword id="KW-0027">Amidation</keyword>
<keyword id="KW-0903">Direct protein sequencing</keyword>
<keyword id="KW-0372">Hormone</keyword>
<keyword id="KW-0873">Pyrrolidone carboxylic acid</keyword>
<keyword id="KW-0964">Secreted</keyword>